<proteinExistence type="inferred from homology"/>
<protein>
    <recommendedName>
        <fullName evidence="1">Glutamyl-Q tRNA(Asp) synthetase</fullName>
        <shortName evidence="1">Glu-Q-RSs</shortName>
        <ecNumber evidence="1">6.1.1.-</ecNumber>
    </recommendedName>
</protein>
<organism>
    <name type="scientific">Methylococcus capsulatus (strain ATCC 33009 / NCIMB 11132 / Bath)</name>
    <dbReference type="NCBI Taxonomy" id="243233"/>
    <lineage>
        <taxon>Bacteria</taxon>
        <taxon>Pseudomonadati</taxon>
        <taxon>Pseudomonadota</taxon>
        <taxon>Gammaproteobacteria</taxon>
        <taxon>Methylococcales</taxon>
        <taxon>Methylococcaceae</taxon>
        <taxon>Methylococcus</taxon>
    </lineage>
</organism>
<accession>Q60BF9</accession>
<keyword id="KW-0030">Aminoacyl-tRNA synthetase</keyword>
<keyword id="KW-0067">ATP-binding</keyword>
<keyword id="KW-0436">Ligase</keyword>
<keyword id="KW-0479">Metal-binding</keyword>
<keyword id="KW-0547">Nucleotide-binding</keyword>
<keyword id="KW-1185">Reference proteome</keyword>
<keyword id="KW-0862">Zinc</keyword>
<gene>
    <name evidence="1" type="primary">gluQ</name>
    <name type="ordered locus">MCA0518</name>
</gene>
<sequence>MNSRHPSAPYRGRFAPSPTGPLHLGSLYTAVVGFCEARRRGGAWLVRIDDADRQRCRQTHADSILRTLETHGLWWDEAVLFQSLRDEIYRVALERLAAGSRVFPCTCPRRELAGSGPIYSGRCRARYPHPPAGEHALRLRVGDAVIGFDDRLQGRIEQDLGSAVGDFVVRRRDGLPAYHLATVIDDAEQRVTEVLRGVDLLDSTPRQILLQECLGLPRPDYCHIPVLTDRGGIKLSKQAGARPVDEDAPSENLWTVLALLGFVPEPPLIGAKPAEILDWAVAHWDIRRLPPGRRIDVGGLAV</sequence>
<name>GLUQ_METCA</name>
<reference key="1">
    <citation type="journal article" date="2004" name="PLoS Biol.">
        <title>Genomic insights into methanotrophy: the complete genome sequence of Methylococcus capsulatus (Bath).</title>
        <authorList>
            <person name="Ward N.L."/>
            <person name="Larsen O."/>
            <person name="Sakwa J."/>
            <person name="Bruseth L."/>
            <person name="Khouri H.M."/>
            <person name="Durkin A.S."/>
            <person name="Dimitrov G."/>
            <person name="Jiang L."/>
            <person name="Scanlan D."/>
            <person name="Kang K.H."/>
            <person name="Lewis M.R."/>
            <person name="Nelson K.E."/>
            <person name="Methe B.A."/>
            <person name="Wu M."/>
            <person name="Heidelberg J.F."/>
            <person name="Paulsen I.T."/>
            <person name="Fouts D.E."/>
            <person name="Ravel J."/>
            <person name="Tettelin H."/>
            <person name="Ren Q."/>
            <person name="Read T.D."/>
            <person name="DeBoy R.T."/>
            <person name="Seshadri R."/>
            <person name="Salzberg S.L."/>
            <person name="Jensen H.B."/>
            <person name="Birkeland N.K."/>
            <person name="Nelson W.C."/>
            <person name="Dodson R.J."/>
            <person name="Grindhaug S.H."/>
            <person name="Holt I.E."/>
            <person name="Eidhammer I."/>
            <person name="Jonasen I."/>
            <person name="Vanaken S."/>
            <person name="Utterback T.R."/>
            <person name="Feldblyum T.V."/>
            <person name="Fraser C.M."/>
            <person name="Lillehaug J.R."/>
            <person name="Eisen J.A."/>
        </authorList>
    </citation>
    <scope>NUCLEOTIDE SEQUENCE [LARGE SCALE GENOMIC DNA]</scope>
    <source>
        <strain>ATCC 33009 / NCIMB 11132 / Bath</strain>
    </source>
</reference>
<comment type="function">
    <text evidence="1">Catalyzes the tRNA-independent activation of glutamate in presence of ATP and the subsequent transfer of glutamate onto a tRNA(Asp). Glutamate is transferred on the 2-amino-5-(4,5-dihydroxy-2-cyclopenten-1-yl) moiety of the queuosine in the wobble position of the QUC anticodon.</text>
</comment>
<comment type="cofactor">
    <cofactor evidence="1">
        <name>Zn(2+)</name>
        <dbReference type="ChEBI" id="CHEBI:29105"/>
    </cofactor>
    <text evidence="1">Binds 1 zinc ion per subunit.</text>
</comment>
<comment type="similarity">
    <text evidence="1">Belongs to the class-I aminoacyl-tRNA synthetase family. GluQ subfamily.</text>
</comment>
<evidence type="ECO:0000255" key="1">
    <source>
        <dbReference type="HAMAP-Rule" id="MF_01428"/>
    </source>
</evidence>
<feature type="chain" id="PRO_0000208305" description="Glutamyl-Q tRNA(Asp) synthetase">
    <location>
        <begin position="1"/>
        <end position="302"/>
    </location>
</feature>
<feature type="short sequence motif" description="'HIGH' region">
    <location>
        <begin position="16"/>
        <end position="26"/>
    </location>
</feature>
<feature type="short sequence motif" description="'KMSKS' region">
    <location>
        <begin position="234"/>
        <end position="238"/>
    </location>
</feature>
<feature type="binding site" evidence="1">
    <location>
        <begin position="13"/>
        <end position="17"/>
    </location>
    <ligand>
        <name>L-glutamate</name>
        <dbReference type="ChEBI" id="CHEBI:29985"/>
    </ligand>
</feature>
<feature type="binding site" evidence="1">
    <location>
        <position position="49"/>
    </location>
    <ligand>
        <name>L-glutamate</name>
        <dbReference type="ChEBI" id="CHEBI:29985"/>
    </ligand>
</feature>
<feature type="binding site" evidence="1">
    <location>
        <position position="105"/>
    </location>
    <ligand>
        <name>Zn(2+)</name>
        <dbReference type="ChEBI" id="CHEBI:29105"/>
    </ligand>
</feature>
<feature type="binding site" evidence="1">
    <location>
        <position position="107"/>
    </location>
    <ligand>
        <name>Zn(2+)</name>
        <dbReference type="ChEBI" id="CHEBI:29105"/>
    </ligand>
</feature>
<feature type="binding site" evidence="1">
    <location>
        <position position="119"/>
    </location>
    <ligand>
        <name>Zn(2+)</name>
        <dbReference type="ChEBI" id="CHEBI:29105"/>
    </ligand>
</feature>
<feature type="binding site" evidence="1">
    <location>
        <position position="123"/>
    </location>
    <ligand>
        <name>Zn(2+)</name>
        <dbReference type="ChEBI" id="CHEBI:29105"/>
    </ligand>
</feature>
<feature type="binding site" evidence="1">
    <location>
        <position position="178"/>
    </location>
    <ligand>
        <name>L-glutamate</name>
        <dbReference type="ChEBI" id="CHEBI:29985"/>
    </ligand>
</feature>
<feature type="binding site" evidence="1">
    <location>
        <position position="196"/>
    </location>
    <ligand>
        <name>L-glutamate</name>
        <dbReference type="ChEBI" id="CHEBI:29985"/>
    </ligand>
</feature>
<feature type="binding site" evidence="1">
    <location>
        <position position="237"/>
    </location>
    <ligand>
        <name>ATP</name>
        <dbReference type="ChEBI" id="CHEBI:30616"/>
    </ligand>
</feature>
<dbReference type="EC" id="6.1.1.-" evidence="1"/>
<dbReference type="EMBL" id="AE017282">
    <property type="protein sequence ID" value="AAU93293.1"/>
    <property type="molecule type" value="Genomic_DNA"/>
</dbReference>
<dbReference type="RefSeq" id="WP_010959866.1">
    <property type="nucleotide sequence ID" value="NC_002977.6"/>
</dbReference>
<dbReference type="SMR" id="Q60BF9"/>
<dbReference type="STRING" id="243233.MCA0518"/>
<dbReference type="GeneID" id="88222848"/>
<dbReference type="KEGG" id="mca:MCA0518"/>
<dbReference type="eggNOG" id="COG0008">
    <property type="taxonomic scope" value="Bacteria"/>
</dbReference>
<dbReference type="HOGENOM" id="CLU_015768_0_1_6"/>
<dbReference type="Proteomes" id="UP000006821">
    <property type="component" value="Chromosome"/>
</dbReference>
<dbReference type="GO" id="GO:0005829">
    <property type="term" value="C:cytosol"/>
    <property type="evidence" value="ECO:0007669"/>
    <property type="project" value="TreeGrafter"/>
</dbReference>
<dbReference type="GO" id="GO:0005524">
    <property type="term" value="F:ATP binding"/>
    <property type="evidence" value="ECO:0007669"/>
    <property type="project" value="UniProtKB-KW"/>
</dbReference>
<dbReference type="GO" id="GO:0004818">
    <property type="term" value="F:glutamate-tRNA ligase activity"/>
    <property type="evidence" value="ECO:0007669"/>
    <property type="project" value="TreeGrafter"/>
</dbReference>
<dbReference type="GO" id="GO:0008270">
    <property type="term" value="F:zinc ion binding"/>
    <property type="evidence" value="ECO:0007669"/>
    <property type="project" value="UniProtKB-UniRule"/>
</dbReference>
<dbReference type="GO" id="GO:0006424">
    <property type="term" value="P:glutamyl-tRNA aminoacylation"/>
    <property type="evidence" value="ECO:0007669"/>
    <property type="project" value="InterPro"/>
</dbReference>
<dbReference type="GO" id="GO:0006400">
    <property type="term" value="P:tRNA modification"/>
    <property type="evidence" value="ECO:0007669"/>
    <property type="project" value="InterPro"/>
</dbReference>
<dbReference type="Gene3D" id="3.40.50.620">
    <property type="entry name" value="HUPs"/>
    <property type="match status" value="1"/>
</dbReference>
<dbReference type="HAMAP" id="MF_01428">
    <property type="entry name" value="Glu_Q_tRNA_synth"/>
    <property type="match status" value="1"/>
</dbReference>
<dbReference type="InterPro" id="IPR022380">
    <property type="entry name" value="Glu-Q_tRNA(Asp)_Synthase"/>
</dbReference>
<dbReference type="InterPro" id="IPR000924">
    <property type="entry name" value="Glu/Gln-tRNA-synth"/>
</dbReference>
<dbReference type="InterPro" id="IPR020058">
    <property type="entry name" value="Glu/Gln-tRNA-synth_Ib_cat-dom"/>
</dbReference>
<dbReference type="InterPro" id="IPR049940">
    <property type="entry name" value="GluQ/Sye"/>
</dbReference>
<dbReference type="InterPro" id="IPR014729">
    <property type="entry name" value="Rossmann-like_a/b/a_fold"/>
</dbReference>
<dbReference type="NCBIfam" id="NF004314">
    <property type="entry name" value="PRK05710.1-3"/>
    <property type="match status" value="1"/>
</dbReference>
<dbReference type="NCBIfam" id="TIGR03838">
    <property type="entry name" value="queuosine_YadB"/>
    <property type="match status" value="1"/>
</dbReference>
<dbReference type="PANTHER" id="PTHR43311">
    <property type="entry name" value="GLUTAMATE--TRNA LIGASE"/>
    <property type="match status" value="1"/>
</dbReference>
<dbReference type="PANTHER" id="PTHR43311:SF1">
    <property type="entry name" value="GLUTAMYL-Q TRNA(ASP) SYNTHETASE"/>
    <property type="match status" value="1"/>
</dbReference>
<dbReference type="Pfam" id="PF00749">
    <property type="entry name" value="tRNA-synt_1c"/>
    <property type="match status" value="1"/>
</dbReference>
<dbReference type="PRINTS" id="PR00987">
    <property type="entry name" value="TRNASYNTHGLU"/>
</dbReference>
<dbReference type="SUPFAM" id="SSF52374">
    <property type="entry name" value="Nucleotidylyl transferase"/>
    <property type="match status" value="1"/>
</dbReference>